<gene>
    <name type="primary">OPG140</name>
    <name type="ORF">A14L</name>
    <name type="ORF">A15L</name>
</gene>
<dbReference type="EMBL" id="X69198">
    <property type="protein sequence ID" value="CAA49059.1"/>
    <property type="molecule type" value="Genomic_DNA"/>
</dbReference>
<dbReference type="PIR" id="F36849">
    <property type="entry name" value="F36849"/>
</dbReference>
<dbReference type="RefSeq" id="NP_042162.1">
    <property type="nucleotide sequence ID" value="NC_001611.1"/>
</dbReference>
<dbReference type="SMR" id="P0DSQ3"/>
<dbReference type="GeneID" id="1486489"/>
<dbReference type="KEGG" id="vg:1486489"/>
<dbReference type="Proteomes" id="UP000002060">
    <property type="component" value="Segment"/>
</dbReference>
<dbReference type="GO" id="GO:0016020">
    <property type="term" value="C:membrane"/>
    <property type="evidence" value="ECO:0007669"/>
    <property type="project" value="UniProtKB-KW"/>
</dbReference>
<dbReference type="GO" id="GO:0019031">
    <property type="term" value="C:viral envelope"/>
    <property type="evidence" value="ECO:0007669"/>
    <property type="project" value="UniProtKB-KW"/>
</dbReference>
<dbReference type="GO" id="GO:0055036">
    <property type="term" value="C:virion membrane"/>
    <property type="evidence" value="ECO:0007669"/>
    <property type="project" value="UniProtKB-SubCell"/>
</dbReference>
<dbReference type="InterPro" id="IPR008785">
    <property type="entry name" value="Poxvirus_A14"/>
</dbReference>
<dbReference type="Pfam" id="PF05767">
    <property type="entry name" value="Pox_A14"/>
    <property type="match status" value="1"/>
</dbReference>
<keyword id="KW-1015">Disulfide bond</keyword>
<keyword id="KW-0472">Membrane</keyword>
<keyword id="KW-0597">Phosphoprotein</keyword>
<keyword id="KW-1185">Reference proteome</keyword>
<keyword id="KW-0812">Transmembrane</keyword>
<keyword id="KW-1133">Transmembrane helix</keyword>
<keyword id="KW-0261">Viral envelope protein</keyword>
<keyword id="KW-0946">Virion</keyword>
<organismHost>
    <name type="scientific">Homo sapiens</name>
    <name type="common">Human</name>
    <dbReference type="NCBI Taxonomy" id="9606"/>
</organismHost>
<proteinExistence type="inferred from homology"/>
<protein>
    <recommendedName>
        <fullName>Virion membrane protein OPG140</fullName>
    </recommendedName>
</protein>
<name>PG140_VAR67</name>
<comment type="function">
    <text evidence="2">Envelope protein which is a major component of the mature virion (MV) membrane. Essential for membrane biogenesis. Is required, together with OPG144, to form bona fide crescents, which can progress to form the immature virion (IV) membrane. OPG140 and OPG144 form a lattice that is stabilized by disulfide bonds and serves as an anchor within the viral membrane to which several other proteins important in virion structure and morphogenesis attach.</text>
</comment>
<comment type="subunit">
    <text evidence="2">Homodimer; disulfide-linked. Interacts with OPG144.</text>
</comment>
<comment type="subcellular location">
    <subcellularLocation>
        <location evidence="2">Virion membrane</location>
        <topology evidence="2">Multi-pass membrane protein</topology>
    </subcellularLocation>
    <text evidence="2">Component of the mature virion (MV) membrane.</text>
</comment>
<comment type="PTM">
    <text evidence="2">Phosphorylated by viral OPG054 kinase, phosphorylation state is regulated by OPG106 phosphatase.</text>
</comment>
<comment type="similarity">
    <text evidence="4">Belongs to the orthopoxvirus OPG140 family.</text>
</comment>
<evidence type="ECO:0000250" key="1"/>
<evidence type="ECO:0000250" key="2">
    <source>
        <dbReference type="UniProtKB" id="Q76ZQ3"/>
    </source>
</evidence>
<evidence type="ECO:0000255" key="3"/>
<evidence type="ECO:0000305" key="4"/>
<accession>P0DSQ3</accession>
<accession>P33839</accession>
<feature type="chain" id="PRO_0000099243" description="Virion membrane protein OPG140">
    <location>
        <begin position="1"/>
        <end position="90"/>
    </location>
</feature>
<feature type="topological domain" description="Intravirion" evidence="3">
    <location>
        <begin position="1"/>
        <end position="10"/>
    </location>
</feature>
<feature type="transmembrane region" description="Helical" evidence="3">
    <location>
        <begin position="11"/>
        <end position="31"/>
    </location>
</feature>
<feature type="topological domain" description="Virion surface" evidence="3">
    <location>
        <begin position="32"/>
        <end position="44"/>
    </location>
</feature>
<feature type="transmembrane region" description="Helical" evidence="3">
    <location>
        <begin position="45"/>
        <end position="65"/>
    </location>
</feature>
<feature type="topological domain" description="Intravirion" evidence="3">
    <location>
        <begin position="66"/>
        <end position="90"/>
    </location>
</feature>
<feature type="modified residue" description="Phosphoserine" evidence="1">
    <location>
        <position position="85"/>
    </location>
</feature>
<feature type="disulfide bond" description="Interchain" evidence="1">
    <location>
        <position position="71"/>
    </location>
</feature>
<sequence>MDMMLMIGNYFSGVLIAGIILLILSCIFAFIDFSKSTSPTRTWKVLSIMSFILGIIITVGMLIYSMWGKHCAPHRVSGVIHTNHSDISVN</sequence>
<reference key="1">
    <citation type="journal article" date="1993" name="FEBS Lett.">
        <title>Genes of variola and vaccinia viruses necessary to overcome the host protective mechanisms.</title>
        <authorList>
            <person name="Shchelkunov S.N."/>
            <person name="Blinov V.M."/>
            <person name="Sandakhchiev L.S."/>
        </authorList>
    </citation>
    <scope>NUCLEOTIDE SEQUENCE [GENOMIC DNA]</scope>
</reference>
<organism>
    <name type="scientific">Variola virus (isolate Human/India/Ind3/1967)</name>
    <name type="common">VARV</name>
    <name type="synonym">Smallpox virus</name>
    <dbReference type="NCBI Taxonomy" id="587200"/>
    <lineage>
        <taxon>Viruses</taxon>
        <taxon>Varidnaviria</taxon>
        <taxon>Bamfordvirae</taxon>
        <taxon>Nucleocytoviricota</taxon>
        <taxon>Pokkesviricetes</taxon>
        <taxon>Chitovirales</taxon>
        <taxon>Poxviridae</taxon>
        <taxon>Chordopoxvirinae</taxon>
        <taxon>Orthopoxvirus</taxon>
        <taxon>Variola virus</taxon>
    </lineage>
</organism>